<organism>
    <name type="scientific">Sus scrofa</name>
    <name type="common">Pig</name>
    <dbReference type="NCBI Taxonomy" id="9823"/>
    <lineage>
        <taxon>Eukaryota</taxon>
        <taxon>Metazoa</taxon>
        <taxon>Chordata</taxon>
        <taxon>Craniata</taxon>
        <taxon>Vertebrata</taxon>
        <taxon>Euteleostomi</taxon>
        <taxon>Mammalia</taxon>
        <taxon>Eutheria</taxon>
        <taxon>Laurasiatheria</taxon>
        <taxon>Artiodactyla</taxon>
        <taxon>Suina</taxon>
        <taxon>Suidae</taxon>
        <taxon>Sus</taxon>
    </lineage>
</organism>
<sequence length="127" mass="14107">MNFSGKYQVQSQENFEAFMKAVGLPDELIQKGKDIKGTSEIVQNGKHFKLTITTGSKVVQNEFTLGEECEMETLTGEKVKTVVQLEGDNKLVTTFKGIKSVTELNGDIITSTMTLGDIVFKRISKRI</sequence>
<name>FABPL_PIG</name>
<feature type="chain" id="PRO_0000067336" description="Fatty acid-binding protein, liver">
    <location>
        <begin position="1"/>
        <end position="127"/>
    </location>
</feature>
<feature type="modified residue" description="N-acetylmethionine" evidence="5">
    <location>
        <position position="1"/>
    </location>
</feature>
<feature type="modified residue" description="Phosphoserine" evidence="3">
    <location>
        <position position="11"/>
    </location>
</feature>
<feature type="modified residue" description="N6-succinyllysine" evidence="4">
    <location>
        <position position="31"/>
    </location>
</feature>
<feature type="modified residue" description="N6-succinyllysine" evidence="4">
    <location>
        <position position="36"/>
    </location>
</feature>
<feature type="modified residue" description="Phosphoserine" evidence="2">
    <location>
        <position position="39"/>
    </location>
</feature>
<feature type="modified residue" description="N6-succinyllysine" evidence="4">
    <location>
        <position position="46"/>
    </location>
</feature>
<feature type="modified residue" description="Phosphothreonine" evidence="3">
    <location>
        <position position="51"/>
    </location>
</feature>
<feature type="modified residue" description="Phosphoserine" evidence="3">
    <location>
        <position position="56"/>
    </location>
</feature>
<feature type="modified residue" description="N6-succinyllysine" evidence="4">
    <location>
        <position position="57"/>
    </location>
</feature>
<feature type="modified residue" description="N6-succinyllysine" evidence="4">
    <location>
        <position position="78"/>
    </location>
</feature>
<feature type="modified residue" description="N6-succinyllysine" evidence="4">
    <location>
        <position position="90"/>
    </location>
</feature>
<feature type="modified residue" description="Phosphoserine" evidence="4">
    <location>
        <position position="100"/>
    </location>
</feature>
<feature type="modified residue" description="N6-succinyllysine" evidence="4">
    <location>
        <position position="121"/>
    </location>
</feature>
<feature type="sequence conflict" description="In Ref. 2; AAX62515 and 3; CAA23150." evidence="7" ref="2 3">
    <original>L</original>
    <variation>M</variation>
    <location>
        <position position="74"/>
    </location>
</feature>
<accession>P49924</accession>
<accession>Q3LSM5</accession>
<accession>Q56G54</accession>
<proteinExistence type="evidence at transcript level"/>
<keyword id="KW-0007">Acetylation</keyword>
<keyword id="KW-0963">Cytoplasm</keyword>
<keyword id="KW-0446">Lipid-binding</keyword>
<keyword id="KW-0597">Phosphoprotein</keyword>
<keyword id="KW-1185">Reference proteome</keyword>
<keyword id="KW-0813">Transport</keyword>
<comment type="function">
    <text evidence="3 6">Plays a role in lipoprotein-mediated cholesterol uptake in hepatocytes. Binds cholesterol. Binds free fatty acids and their coenzyme A derivatives, bilirubin, and some other small molecules in the cytoplasm. May be involved in intracellular lipid transport.</text>
</comment>
<comment type="subunit">
    <text evidence="1">Monomer.</text>
</comment>
<comment type="subcellular location">
    <subcellularLocation>
        <location>Cytoplasm</location>
    </subcellularLocation>
</comment>
<comment type="domain">
    <text evidence="1">Forms a beta-barrel structure that accommodates hydrophobic ligands in its interior.</text>
</comment>
<comment type="similarity">
    <text evidence="7">Belongs to the calycin superfamily. Fatty-acid binding protein (FABP) family.</text>
</comment>
<evidence type="ECO:0000250" key="1"/>
<evidence type="ECO:0000250" key="2">
    <source>
        <dbReference type="UniProtKB" id="P02692"/>
    </source>
</evidence>
<evidence type="ECO:0000250" key="3">
    <source>
        <dbReference type="UniProtKB" id="P07148"/>
    </source>
</evidence>
<evidence type="ECO:0000250" key="4">
    <source>
        <dbReference type="UniProtKB" id="P12710"/>
    </source>
</evidence>
<evidence type="ECO:0000250" key="5">
    <source>
        <dbReference type="UniProtKB" id="P80425"/>
    </source>
</evidence>
<evidence type="ECO:0000250" key="6">
    <source>
        <dbReference type="UniProtKB" id="P82289"/>
    </source>
</evidence>
<evidence type="ECO:0000305" key="7"/>
<dbReference type="EMBL" id="X77640">
    <property type="protein sequence ID" value="CAA54730.1"/>
    <property type="molecule type" value="mRNA"/>
</dbReference>
<dbReference type="EMBL" id="AY960623">
    <property type="protein sequence ID" value="AAX62515.1"/>
    <property type="molecule type" value="mRNA"/>
</dbReference>
<dbReference type="EMBL" id="DQ182323">
    <property type="protein sequence ID" value="ABA19231.1"/>
    <property type="molecule type" value="Genomic_DNA"/>
</dbReference>
<dbReference type="EMBL" id="F14603">
    <property type="protein sequence ID" value="CAA23150.1"/>
    <property type="molecule type" value="mRNA"/>
</dbReference>
<dbReference type="PIR" id="S45379">
    <property type="entry name" value="S45379"/>
</dbReference>
<dbReference type="RefSeq" id="NP_001004046.1">
    <property type="nucleotide sequence ID" value="NM_001004046.2"/>
</dbReference>
<dbReference type="SMR" id="P49924"/>
<dbReference type="FunCoup" id="P49924">
    <property type="interactions" value="487"/>
</dbReference>
<dbReference type="STRING" id="9823.ENSSSCP00000008769"/>
<dbReference type="PaxDb" id="9823-ENSSSCP00000008769"/>
<dbReference type="PeptideAtlas" id="P49924"/>
<dbReference type="Ensembl" id="ENSSSCT00115017727">
    <property type="protein sequence ID" value="ENSSSCP00115016726"/>
    <property type="gene ID" value="ENSSSCG00115010303"/>
</dbReference>
<dbReference type="GeneID" id="445535"/>
<dbReference type="KEGG" id="ssc:445535"/>
<dbReference type="CTD" id="2168"/>
<dbReference type="eggNOG" id="KOG4015">
    <property type="taxonomic scope" value="Eukaryota"/>
</dbReference>
<dbReference type="HOGENOM" id="CLU_113772_4_2_1"/>
<dbReference type="InParanoid" id="P49924"/>
<dbReference type="OrthoDB" id="9971011at2759"/>
<dbReference type="TreeFam" id="TF330348"/>
<dbReference type="Proteomes" id="UP000008227">
    <property type="component" value="Unplaced"/>
</dbReference>
<dbReference type="Proteomes" id="UP000314985">
    <property type="component" value="Unplaced"/>
</dbReference>
<dbReference type="Proteomes" id="UP000694570">
    <property type="component" value="Unplaced"/>
</dbReference>
<dbReference type="Proteomes" id="UP000694571">
    <property type="component" value="Unplaced"/>
</dbReference>
<dbReference type="Proteomes" id="UP000694720">
    <property type="component" value="Unplaced"/>
</dbReference>
<dbReference type="Proteomes" id="UP000694722">
    <property type="component" value="Unplaced"/>
</dbReference>
<dbReference type="Proteomes" id="UP000694723">
    <property type="component" value="Unplaced"/>
</dbReference>
<dbReference type="Proteomes" id="UP000694724">
    <property type="component" value="Unplaced"/>
</dbReference>
<dbReference type="Proteomes" id="UP000694725">
    <property type="component" value="Unplaced"/>
</dbReference>
<dbReference type="Proteomes" id="UP000694726">
    <property type="component" value="Unplaced"/>
</dbReference>
<dbReference type="Proteomes" id="UP000694727">
    <property type="component" value="Unplaced"/>
</dbReference>
<dbReference type="Proteomes" id="UP000694728">
    <property type="component" value="Unplaced"/>
</dbReference>
<dbReference type="GO" id="GO:0005829">
    <property type="term" value="C:cytosol"/>
    <property type="evidence" value="ECO:0000318"/>
    <property type="project" value="GO_Central"/>
</dbReference>
<dbReference type="GO" id="GO:0005634">
    <property type="term" value="C:nucleus"/>
    <property type="evidence" value="ECO:0000318"/>
    <property type="project" value="GO_Central"/>
</dbReference>
<dbReference type="GO" id="GO:0005504">
    <property type="term" value="F:fatty acid binding"/>
    <property type="evidence" value="ECO:0000318"/>
    <property type="project" value="GO_Central"/>
</dbReference>
<dbReference type="GO" id="GO:0015908">
    <property type="term" value="P:fatty acid transport"/>
    <property type="evidence" value="ECO:0000318"/>
    <property type="project" value="GO_Central"/>
</dbReference>
<dbReference type="CDD" id="cd19444">
    <property type="entry name" value="FABP1"/>
    <property type="match status" value="1"/>
</dbReference>
<dbReference type="FunFam" id="2.40.128.20:FF:000006">
    <property type="entry name" value="Fatty acid-binding protein, liver"/>
    <property type="match status" value="1"/>
</dbReference>
<dbReference type="Gene3D" id="2.40.128.20">
    <property type="match status" value="1"/>
</dbReference>
<dbReference type="InterPro" id="IPR012674">
    <property type="entry name" value="Calycin"/>
</dbReference>
<dbReference type="InterPro" id="IPR000463">
    <property type="entry name" value="Fatty_acid-bd"/>
</dbReference>
<dbReference type="InterPro" id="IPR031259">
    <property type="entry name" value="ILBP"/>
</dbReference>
<dbReference type="PANTHER" id="PTHR11955">
    <property type="entry name" value="FATTY ACID BINDING PROTEIN"/>
    <property type="match status" value="1"/>
</dbReference>
<dbReference type="Pfam" id="PF14651">
    <property type="entry name" value="Lipocalin_7"/>
    <property type="match status" value="1"/>
</dbReference>
<dbReference type="PRINTS" id="PR00178">
    <property type="entry name" value="FATTYACIDBP"/>
</dbReference>
<dbReference type="SUPFAM" id="SSF50814">
    <property type="entry name" value="Lipocalins"/>
    <property type="match status" value="1"/>
</dbReference>
<dbReference type="PROSITE" id="PS00214">
    <property type="entry name" value="FABP"/>
    <property type="match status" value="1"/>
</dbReference>
<protein>
    <recommendedName>
        <fullName>Fatty acid-binding protein, liver</fullName>
    </recommendedName>
    <alternativeName>
        <fullName>Fatty acid-binding protein 1</fullName>
    </alternativeName>
    <alternativeName>
        <fullName>Liver-type fatty acid-binding protein</fullName>
        <shortName>L-FABP</shortName>
    </alternativeName>
</protein>
<gene>
    <name type="primary">FABP1</name>
</gene>
<reference key="1">
    <citation type="journal article" date="1993" name="J. Nutr. Biochem.">
        <title>Expression of differentiated functions in the developing porcine small intestine.</title>
        <authorList>
            <person name="Perozzi G."/>
            <person name="Baril D."/>
            <person name="Murgia C."/>
            <person name="Kelly D."/>
            <person name="Begbie R."/>
            <person name="King T.P."/>
        </authorList>
        <dbReference type="AGRICOLA" id="IND20415199"/>
    </citation>
    <scope>NUCLEOTIDE SEQUENCE [MRNA]</scope>
    <source>
        <strain>Large white X Landrace</strain>
        <tissue>Jejunum</tissue>
    </source>
</reference>
<reference key="2">
    <citation type="submission" date="2005-08" db="EMBL/GenBank/DDBJ databases">
        <title>Sus scrofa liver fatty acid binding protein (FABP1) gene.</title>
        <authorList>
            <person name="Jiang Y.Z."/>
            <person name="Li X.W."/>
        </authorList>
    </citation>
    <scope>NUCLEOTIDE SEQUENCE [GENOMIC DNA / MRNA]</scope>
</reference>
<reference key="3">
    <citation type="journal article" date="1996" name="Mamm. Genome">
        <title>Evaluation and characterization of a porcine small intestine cDNA library: analysis of 839 clones.</title>
        <authorList>
            <person name="Winteroe A.K."/>
            <person name="Fredholm M."/>
            <person name="Davies W."/>
        </authorList>
    </citation>
    <scope>NUCLEOTIDE SEQUENCE [LARGE SCALE MRNA]</scope>
    <source>
        <tissue>Small intestine</tissue>
    </source>
</reference>